<reference key="1">
    <citation type="journal article" date="1997" name="Arch. Biochem. Biophys.">
        <title>Determination of the amino acid sequence of the plant cytolysin enterolobin.</title>
        <authorList>
            <person name="Fontes W."/>
            <person name="Sousa M.V."/>
            <person name="Aragao J.B."/>
            <person name="Morhy L."/>
        </authorList>
    </citation>
    <scope>PROTEIN SEQUENCE</scope>
    <source>
        <strain>cv. Morong</strain>
        <tissue>Seed</tissue>
    </source>
</reference>
<reference key="2">
    <citation type="journal article" date="1994" name="J. Protein Chem.">
        <title>Homology between the seed cytolysin enterolobin and bacterial aerolysins.</title>
        <authorList>
            <person name="Sousa M.V."/>
            <person name="Richardson M."/>
            <person name="Fontes W."/>
            <person name="Morhy L."/>
        </authorList>
    </citation>
    <scope>PRELIMINARY PARTIAL PROTEIN SEQUENCE</scope>
    <source>
        <tissue>Seed</tissue>
    </source>
</reference>
<comment type="function">
    <text>Cytolytic protein with insecticidal activity. Acts as a pro-inflammatory agent.</text>
</comment>
<comment type="subunit">
    <text>Oligomerizes as a hexamer.</text>
</comment>
<comment type="PTM">
    <text>The N-terminus is blocked.</text>
</comment>
<comment type="similarity">
    <text evidence="2">Belongs to the aerolysin family.</text>
</comment>
<protein>
    <recommendedName>
        <fullName>Cytolytic protein enterolobin</fullName>
    </recommendedName>
</protein>
<organism>
    <name type="scientific">Enterolobium contortisiliquum</name>
    <name type="common">Pacara earpod tree</name>
    <name type="synonym">Mimosa contortisiliqua</name>
    <dbReference type="NCBI Taxonomy" id="55671"/>
    <lineage>
        <taxon>Eukaryota</taxon>
        <taxon>Viridiplantae</taxon>
        <taxon>Streptophyta</taxon>
        <taxon>Embryophyta</taxon>
        <taxon>Tracheophyta</taxon>
        <taxon>Spermatophyta</taxon>
        <taxon>Magnoliopsida</taxon>
        <taxon>eudicotyledons</taxon>
        <taxon>Gunneridae</taxon>
        <taxon>Pentapetalae</taxon>
        <taxon>rosids</taxon>
        <taxon>fabids</taxon>
        <taxon>Fabales</taxon>
        <taxon>Fabaceae</taxon>
        <taxon>Caesalpinioideae</taxon>
        <taxon>mimosoid clade</taxon>
        <taxon>Ingeae</taxon>
        <taxon>Enterolobium</taxon>
    </lineage>
</organism>
<sequence>TQRDTLTKGMTQGQIVAGPDDTKIDQSIMDQGVCATIALPFDIHVAQSVKNVMFMFAWTQKHGLAVNNLVILGVPGYLNMWKRFGESTDEPSESSKRCCYEKPTDPVSGEIVTPAFDPADEISEITHQEESADIKPVRLLDARLLGYTWVTQNHSWIVAYSDEPIKDGNEVVTLRNIGNNNFCDALRKCTDKSACIHQYLQFAWNSFGDPTVRTRQVVFEVVGWADSDTTNNNSDTLFYRTTQADNWQVLTESKTNTIGLAEVDWFNFKYETKQEVSIEIARQTWTSTLNAGVSTVSRVPKVPIKVKINVDTFLKVLFAVYKADLYDIFLQFASVFKKGGNRQYWLNYTQEPNTKSNYNHKIYNDKIRYLQEDVQVHPNETQSKWWWWSFKKVALTTMTVVALTRFKASGINGQYISARQFSGGETVSPYRLAAPFDSCLWRRSPNPLGTDGLKVALAHHPLAGASNRNKLRVSIPAQCICSITA</sequence>
<accession>P81007</accession>
<name>ENT_ENTCO</name>
<dbReference type="PIR" id="A57982">
    <property type="entry name" value="A57982"/>
</dbReference>
<dbReference type="TCDB" id="1.C.4.3.1">
    <property type="family name" value="the aerolysin channel-forming toxin (aerolysin) family"/>
</dbReference>
<dbReference type="GO" id="GO:0031640">
    <property type="term" value="P:killing of cells of another organism"/>
    <property type="evidence" value="ECO:0007669"/>
    <property type="project" value="UniProtKB-KW"/>
</dbReference>
<dbReference type="Gene3D" id="2.170.15.10">
    <property type="entry name" value="Proaerolysin, chain A, domain 3"/>
    <property type="match status" value="1"/>
</dbReference>
<dbReference type="InterPro" id="IPR055267">
    <property type="entry name" value="Aerolysin-like_C"/>
</dbReference>
<dbReference type="SMART" id="SM00999">
    <property type="entry name" value="Aerolysin"/>
    <property type="match status" value="1"/>
</dbReference>
<dbReference type="SUPFAM" id="SSF56973">
    <property type="entry name" value="Aerolisin/ETX pore-forming domain"/>
    <property type="match status" value="1"/>
</dbReference>
<proteinExistence type="evidence at protein level"/>
<keyword id="KW-0204">Cytolysis</keyword>
<keyword id="KW-0903">Direct protein sequencing</keyword>
<keyword id="KW-1015">Disulfide bond</keyword>
<feature type="chain" id="PRO_0000194264" description="Cytolytic protein enterolobin">
    <location>
        <begin position="1"/>
        <end position="485"/>
    </location>
</feature>
<feature type="disulfide bond" evidence="1">
    <location>
        <begin position="34"/>
        <end position="98"/>
    </location>
</feature>
<feature type="disulfide bond" evidence="1">
    <location>
        <begin position="183"/>
        <end position="189"/>
    </location>
</feature>
<evidence type="ECO:0000250" key="1"/>
<evidence type="ECO:0000305" key="2"/>